<evidence type="ECO:0000255" key="1">
    <source>
        <dbReference type="HAMAP-Rule" id="MF_01008"/>
    </source>
</evidence>
<evidence type="ECO:0000255" key="2">
    <source>
        <dbReference type="PROSITE-ProRule" id="PRU01076"/>
    </source>
</evidence>
<name>MRAZ_LEGPC</name>
<reference key="1">
    <citation type="submission" date="2006-11" db="EMBL/GenBank/DDBJ databases">
        <title>Identification and characterization of a new conjugation/ type IVA secretion system (trb/tra) of L. pneumophila Corby localized on a mobile genomic island.</title>
        <authorList>
            <person name="Gloeckner G."/>
            <person name="Albert-Weissenberger C."/>
            <person name="Weinmann E."/>
            <person name="Jacobi S."/>
            <person name="Schunder E."/>
            <person name="Steinert M."/>
            <person name="Buchrieser C."/>
            <person name="Hacker J."/>
            <person name="Heuner K."/>
        </authorList>
    </citation>
    <scope>NUCLEOTIDE SEQUENCE [LARGE SCALE GENOMIC DNA]</scope>
    <source>
        <strain>Corby</strain>
    </source>
</reference>
<accession>A5IG00</accession>
<organism>
    <name type="scientific">Legionella pneumophila (strain Corby)</name>
    <dbReference type="NCBI Taxonomy" id="400673"/>
    <lineage>
        <taxon>Bacteria</taxon>
        <taxon>Pseudomonadati</taxon>
        <taxon>Pseudomonadota</taxon>
        <taxon>Gammaproteobacteria</taxon>
        <taxon>Legionellales</taxon>
        <taxon>Legionellaceae</taxon>
        <taxon>Legionella</taxon>
    </lineage>
</organism>
<comment type="subunit">
    <text evidence="1">Forms oligomers.</text>
</comment>
<comment type="subcellular location">
    <subcellularLocation>
        <location evidence="1">Cytoplasm</location>
        <location evidence="1">Nucleoid</location>
    </subcellularLocation>
</comment>
<comment type="similarity">
    <text evidence="1">Belongs to the MraZ family.</text>
</comment>
<protein>
    <recommendedName>
        <fullName>Transcriptional regulator MraZ</fullName>
    </recommendedName>
</protein>
<proteinExistence type="inferred from homology"/>
<gene>
    <name evidence="1" type="primary">mraZ</name>
    <name type="ordered locus">LPC_2378</name>
</gene>
<keyword id="KW-0963">Cytoplasm</keyword>
<keyword id="KW-0238">DNA-binding</keyword>
<keyword id="KW-0677">Repeat</keyword>
<keyword id="KW-0804">Transcription</keyword>
<keyword id="KW-0805">Transcription regulation</keyword>
<sequence>MFRGINAITIDTKGRLAIPTRYRSALGAEDKIPLVVTIDTEETCLLLYTAAQWQIIEDNLQKLPSFNAAARRIQRLLIGHATDVEVDANGRVLLPTVLRNYAKLEKDVVMIGQGNKFEVWNKELWESKREQWLAEEASMTDGLPEEMKTFSL</sequence>
<feature type="chain" id="PRO_1000062892" description="Transcriptional regulator MraZ">
    <location>
        <begin position="1"/>
        <end position="152"/>
    </location>
</feature>
<feature type="domain" description="SpoVT-AbrB 1" evidence="2">
    <location>
        <begin position="5"/>
        <end position="52"/>
    </location>
</feature>
<feature type="domain" description="SpoVT-AbrB 2" evidence="2">
    <location>
        <begin position="81"/>
        <end position="124"/>
    </location>
</feature>
<dbReference type="EMBL" id="CP000675">
    <property type="protein sequence ID" value="ABQ56300.1"/>
    <property type="molecule type" value="Genomic_DNA"/>
</dbReference>
<dbReference type="RefSeq" id="WP_011213343.1">
    <property type="nucleotide sequence ID" value="NZ_JAPMSS010000002.1"/>
</dbReference>
<dbReference type="SMR" id="A5IG00"/>
<dbReference type="GeneID" id="57034901"/>
<dbReference type="KEGG" id="lpc:LPC_2378"/>
<dbReference type="HOGENOM" id="CLU_107907_2_0_6"/>
<dbReference type="GO" id="GO:0005737">
    <property type="term" value="C:cytoplasm"/>
    <property type="evidence" value="ECO:0007669"/>
    <property type="project" value="UniProtKB-UniRule"/>
</dbReference>
<dbReference type="GO" id="GO:0009295">
    <property type="term" value="C:nucleoid"/>
    <property type="evidence" value="ECO:0007669"/>
    <property type="project" value="UniProtKB-SubCell"/>
</dbReference>
<dbReference type="GO" id="GO:0003700">
    <property type="term" value="F:DNA-binding transcription factor activity"/>
    <property type="evidence" value="ECO:0007669"/>
    <property type="project" value="UniProtKB-UniRule"/>
</dbReference>
<dbReference type="GO" id="GO:0000976">
    <property type="term" value="F:transcription cis-regulatory region binding"/>
    <property type="evidence" value="ECO:0007669"/>
    <property type="project" value="TreeGrafter"/>
</dbReference>
<dbReference type="GO" id="GO:2000143">
    <property type="term" value="P:negative regulation of DNA-templated transcription initiation"/>
    <property type="evidence" value="ECO:0007669"/>
    <property type="project" value="TreeGrafter"/>
</dbReference>
<dbReference type="CDD" id="cd16321">
    <property type="entry name" value="MraZ_C"/>
    <property type="match status" value="1"/>
</dbReference>
<dbReference type="CDD" id="cd16320">
    <property type="entry name" value="MraZ_N"/>
    <property type="match status" value="1"/>
</dbReference>
<dbReference type="Gene3D" id="3.40.1550.20">
    <property type="entry name" value="Transcriptional regulator MraZ domain"/>
    <property type="match status" value="1"/>
</dbReference>
<dbReference type="HAMAP" id="MF_01008">
    <property type="entry name" value="MraZ"/>
    <property type="match status" value="1"/>
</dbReference>
<dbReference type="InterPro" id="IPR003444">
    <property type="entry name" value="MraZ"/>
</dbReference>
<dbReference type="InterPro" id="IPR035644">
    <property type="entry name" value="MraZ_C"/>
</dbReference>
<dbReference type="InterPro" id="IPR020603">
    <property type="entry name" value="MraZ_dom"/>
</dbReference>
<dbReference type="InterPro" id="IPR035642">
    <property type="entry name" value="MraZ_N"/>
</dbReference>
<dbReference type="InterPro" id="IPR038619">
    <property type="entry name" value="MraZ_sf"/>
</dbReference>
<dbReference type="InterPro" id="IPR007159">
    <property type="entry name" value="SpoVT-AbrB_dom"/>
</dbReference>
<dbReference type="InterPro" id="IPR037914">
    <property type="entry name" value="SpoVT-AbrB_sf"/>
</dbReference>
<dbReference type="NCBIfam" id="TIGR00242">
    <property type="entry name" value="division/cell wall cluster transcriptional repressor MraZ"/>
    <property type="match status" value="1"/>
</dbReference>
<dbReference type="PANTHER" id="PTHR34701">
    <property type="entry name" value="TRANSCRIPTIONAL REGULATOR MRAZ"/>
    <property type="match status" value="1"/>
</dbReference>
<dbReference type="PANTHER" id="PTHR34701:SF1">
    <property type="entry name" value="TRANSCRIPTIONAL REGULATOR MRAZ"/>
    <property type="match status" value="1"/>
</dbReference>
<dbReference type="Pfam" id="PF02381">
    <property type="entry name" value="MraZ"/>
    <property type="match status" value="2"/>
</dbReference>
<dbReference type="SUPFAM" id="SSF89447">
    <property type="entry name" value="AbrB/MazE/MraZ-like"/>
    <property type="match status" value="1"/>
</dbReference>
<dbReference type="PROSITE" id="PS51740">
    <property type="entry name" value="SPOVT_ABRB"/>
    <property type="match status" value="2"/>
</dbReference>